<name>PSTB_GEOSL</name>
<proteinExistence type="inferred from homology"/>
<comment type="function">
    <text evidence="1">Part of the ABC transporter complex PstSACB involved in phosphate import. Responsible for energy coupling to the transport system.</text>
</comment>
<comment type="catalytic activity">
    <reaction evidence="1">
        <text>phosphate(out) + ATP + H2O = ADP + 2 phosphate(in) + H(+)</text>
        <dbReference type="Rhea" id="RHEA:24440"/>
        <dbReference type="ChEBI" id="CHEBI:15377"/>
        <dbReference type="ChEBI" id="CHEBI:15378"/>
        <dbReference type="ChEBI" id="CHEBI:30616"/>
        <dbReference type="ChEBI" id="CHEBI:43474"/>
        <dbReference type="ChEBI" id="CHEBI:456216"/>
        <dbReference type="EC" id="7.3.2.1"/>
    </reaction>
</comment>
<comment type="subunit">
    <text evidence="1">The complex is composed of two ATP-binding proteins (PstB), two transmembrane proteins (PstC and PstA) and a solute-binding protein (PstS).</text>
</comment>
<comment type="subcellular location">
    <subcellularLocation>
        <location evidence="1">Cell inner membrane</location>
        <topology evidence="1">Peripheral membrane protein</topology>
    </subcellularLocation>
</comment>
<comment type="similarity">
    <text evidence="1">Belongs to the ABC transporter superfamily. Phosphate importer (TC 3.A.1.7) family.</text>
</comment>
<dbReference type="EC" id="7.3.2.1" evidence="1"/>
<dbReference type="EMBL" id="AE017180">
    <property type="protein sequence ID" value="AAR34422.1"/>
    <property type="molecule type" value="Genomic_DNA"/>
</dbReference>
<dbReference type="RefSeq" id="NP_952149.1">
    <property type="nucleotide sequence ID" value="NC_002939.5"/>
</dbReference>
<dbReference type="RefSeq" id="WP_010941757.1">
    <property type="nucleotide sequence ID" value="NC_002939.5"/>
</dbReference>
<dbReference type="SMR" id="Q74E68"/>
<dbReference type="FunCoup" id="Q74E68">
    <property type="interactions" value="398"/>
</dbReference>
<dbReference type="STRING" id="243231.GSU1096"/>
<dbReference type="EnsemblBacteria" id="AAR34422">
    <property type="protein sequence ID" value="AAR34422"/>
    <property type="gene ID" value="GSU1096"/>
</dbReference>
<dbReference type="KEGG" id="gsu:GSU1096"/>
<dbReference type="PATRIC" id="fig|243231.5.peg.1092"/>
<dbReference type="eggNOG" id="COG1117">
    <property type="taxonomic scope" value="Bacteria"/>
</dbReference>
<dbReference type="HOGENOM" id="CLU_000604_1_22_7"/>
<dbReference type="InParanoid" id="Q74E68"/>
<dbReference type="OrthoDB" id="5429817at2"/>
<dbReference type="Proteomes" id="UP000000577">
    <property type="component" value="Chromosome"/>
</dbReference>
<dbReference type="GO" id="GO:0005886">
    <property type="term" value="C:plasma membrane"/>
    <property type="evidence" value="ECO:0007669"/>
    <property type="project" value="UniProtKB-SubCell"/>
</dbReference>
<dbReference type="GO" id="GO:0005524">
    <property type="term" value="F:ATP binding"/>
    <property type="evidence" value="ECO:0007669"/>
    <property type="project" value="UniProtKB-KW"/>
</dbReference>
<dbReference type="GO" id="GO:0016887">
    <property type="term" value="F:ATP hydrolysis activity"/>
    <property type="evidence" value="ECO:0007669"/>
    <property type="project" value="InterPro"/>
</dbReference>
<dbReference type="GO" id="GO:0015415">
    <property type="term" value="F:ATPase-coupled phosphate ion transmembrane transporter activity"/>
    <property type="evidence" value="ECO:0007669"/>
    <property type="project" value="UniProtKB-EC"/>
</dbReference>
<dbReference type="GO" id="GO:0035435">
    <property type="term" value="P:phosphate ion transmembrane transport"/>
    <property type="evidence" value="ECO:0007669"/>
    <property type="project" value="InterPro"/>
</dbReference>
<dbReference type="CDD" id="cd03260">
    <property type="entry name" value="ABC_PstB_phosphate_transporter"/>
    <property type="match status" value="1"/>
</dbReference>
<dbReference type="Gene3D" id="3.40.50.300">
    <property type="entry name" value="P-loop containing nucleotide triphosphate hydrolases"/>
    <property type="match status" value="1"/>
</dbReference>
<dbReference type="InterPro" id="IPR003593">
    <property type="entry name" value="AAA+_ATPase"/>
</dbReference>
<dbReference type="InterPro" id="IPR003439">
    <property type="entry name" value="ABC_transporter-like_ATP-bd"/>
</dbReference>
<dbReference type="InterPro" id="IPR017871">
    <property type="entry name" value="ABC_transporter-like_CS"/>
</dbReference>
<dbReference type="InterPro" id="IPR027417">
    <property type="entry name" value="P-loop_NTPase"/>
</dbReference>
<dbReference type="InterPro" id="IPR005670">
    <property type="entry name" value="PstB-like"/>
</dbReference>
<dbReference type="NCBIfam" id="TIGR00972">
    <property type="entry name" value="3a0107s01c2"/>
    <property type="match status" value="1"/>
</dbReference>
<dbReference type="PANTHER" id="PTHR43423">
    <property type="entry name" value="ABC TRANSPORTER I FAMILY MEMBER 17"/>
    <property type="match status" value="1"/>
</dbReference>
<dbReference type="PANTHER" id="PTHR43423:SF1">
    <property type="entry name" value="ABC TRANSPORTER I FAMILY MEMBER 17"/>
    <property type="match status" value="1"/>
</dbReference>
<dbReference type="Pfam" id="PF00005">
    <property type="entry name" value="ABC_tran"/>
    <property type="match status" value="1"/>
</dbReference>
<dbReference type="SMART" id="SM00382">
    <property type="entry name" value="AAA"/>
    <property type="match status" value="1"/>
</dbReference>
<dbReference type="SUPFAM" id="SSF52540">
    <property type="entry name" value="P-loop containing nucleoside triphosphate hydrolases"/>
    <property type="match status" value="1"/>
</dbReference>
<dbReference type="PROSITE" id="PS00211">
    <property type="entry name" value="ABC_TRANSPORTER_1"/>
    <property type="match status" value="1"/>
</dbReference>
<dbReference type="PROSITE" id="PS50893">
    <property type="entry name" value="ABC_TRANSPORTER_2"/>
    <property type="match status" value="1"/>
</dbReference>
<dbReference type="PROSITE" id="PS51238">
    <property type="entry name" value="PSTB"/>
    <property type="match status" value="1"/>
</dbReference>
<accession>Q74E68</accession>
<sequence length="259" mass="29110">MSASVQPVLKAESKNLNFYYGDFKALKGISLPVHDKRITALIGPSGCGKSTFLRCFNRMHDLYPGNRYDGEITLNPDGVNILSPKVDPIEVRMRISMVFQKPNPFPKSIFENVAYGLRVRGISKRSVLEEKVEEALTNAAIWNEVKDRLSDLAFNLSGGQQQRLCIARALAIDPEIMLFDEPTSALDPIATANIEELMAELKERFTILIVTHNMQQAARVSDFTAFLYLGEVVEFNDTKKIFTTPDNPRTEDYITGRFG</sequence>
<gene>
    <name evidence="1" type="primary">pstB</name>
    <name type="ordered locus">GSU1096</name>
</gene>
<keyword id="KW-0067">ATP-binding</keyword>
<keyword id="KW-0997">Cell inner membrane</keyword>
<keyword id="KW-1003">Cell membrane</keyword>
<keyword id="KW-0472">Membrane</keyword>
<keyword id="KW-0547">Nucleotide-binding</keyword>
<keyword id="KW-0592">Phosphate transport</keyword>
<keyword id="KW-1185">Reference proteome</keyword>
<keyword id="KW-1278">Translocase</keyword>
<keyword id="KW-0813">Transport</keyword>
<feature type="chain" id="PRO_0000092819" description="Phosphate import ATP-binding protein PstB">
    <location>
        <begin position="1"/>
        <end position="259"/>
    </location>
</feature>
<feature type="domain" description="ABC transporter" evidence="1">
    <location>
        <begin position="11"/>
        <end position="254"/>
    </location>
</feature>
<feature type="binding site" evidence="1">
    <location>
        <begin position="43"/>
        <end position="50"/>
    </location>
    <ligand>
        <name>ATP</name>
        <dbReference type="ChEBI" id="CHEBI:30616"/>
    </ligand>
</feature>
<organism>
    <name type="scientific">Geobacter sulfurreducens (strain ATCC 51573 / DSM 12127 / PCA)</name>
    <dbReference type="NCBI Taxonomy" id="243231"/>
    <lineage>
        <taxon>Bacteria</taxon>
        <taxon>Pseudomonadati</taxon>
        <taxon>Thermodesulfobacteriota</taxon>
        <taxon>Desulfuromonadia</taxon>
        <taxon>Geobacterales</taxon>
        <taxon>Geobacteraceae</taxon>
        <taxon>Geobacter</taxon>
    </lineage>
</organism>
<evidence type="ECO:0000255" key="1">
    <source>
        <dbReference type="HAMAP-Rule" id="MF_01702"/>
    </source>
</evidence>
<reference key="1">
    <citation type="journal article" date="2003" name="Science">
        <title>Genome of Geobacter sulfurreducens: metal reduction in subsurface environments.</title>
        <authorList>
            <person name="Methe B.A."/>
            <person name="Nelson K.E."/>
            <person name="Eisen J.A."/>
            <person name="Paulsen I.T."/>
            <person name="Nelson W.C."/>
            <person name="Heidelberg J.F."/>
            <person name="Wu D."/>
            <person name="Wu M."/>
            <person name="Ward N.L."/>
            <person name="Beanan M.J."/>
            <person name="Dodson R.J."/>
            <person name="Madupu R."/>
            <person name="Brinkac L.M."/>
            <person name="Daugherty S.C."/>
            <person name="DeBoy R.T."/>
            <person name="Durkin A.S."/>
            <person name="Gwinn M.L."/>
            <person name="Kolonay J.F."/>
            <person name="Sullivan S.A."/>
            <person name="Haft D.H."/>
            <person name="Selengut J."/>
            <person name="Davidsen T.M."/>
            <person name="Zafar N."/>
            <person name="White O."/>
            <person name="Tran B."/>
            <person name="Romero C."/>
            <person name="Forberger H.A."/>
            <person name="Weidman J.F."/>
            <person name="Khouri H.M."/>
            <person name="Feldblyum T.V."/>
            <person name="Utterback T.R."/>
            <person name="Van Aken S.E."/>
            <person name="Lovley D.R."/>
            <person name="Fraser C.M."/>
        </authorList>
    </citation>
    <scope>NUCLEOTIDE SEQUENCE [LARGE SCALE GENOMIC DNA]</scope>
    <source>
        <strain>ATCC 51573 / DSM 12127 / PCA</strain>
    </source>
</reference>
<protein>
    <recommendedName>
        <fullName evidence="1">Phosphate import ATP-binding protein PstB</fullName>
        <ecNumber evidence="1">7.3.2.1</ecNumber>
    </recommendedName>
    <alternativeName>
        <fullName evidence="1">ABC phosphate transporter</fullName>
    </alternativeName>
    <alternativeName>
        <fullName evidence="1">Phosphate-transporting ATPase</fullName>
    </alternativeName>
</protein>